<name>PIGN_MOUSE</name>
<reference key="1">
    <citation type="journal article" date="1999" name="J. Biol. Chem.">
        <title>Pig-n, a mammalian homologue of yeast Mcd4p, is involved in transferring phosphoethanolamine to the first mannose of the glycosylphosphatidylinositol.</title>
        <authorList>
            <person name="Hong Y."/>
            <person name="Maeda Y."/>
            <person name="Watanabe R."/>
            <person name="Ohishi K."/>
            <person name="Mishkind M."/>
            <person name="Riezman H."/>
            <person name="Kinoshita T."/>
        </authorList>
    </citation>
    <scope>NUCLEOTIDE SEQUENCE [MRNA] (ISOFORMS 1 AND 2)</scope>
    <scope>NUCLEOTIDE SEQUENCE [GENOMIC DNA] OF 1-391</scope>
    <scope>FUNCTION</scope>
    <scope>CATALYTIC ACTIVITY</scope>
    <scope>SUBCELLULAR LOCATION</scope>
    <source>
        <tissue>Testis</tissue>
    </source>
</reference>
<reference key="2">
    <citation type="journal article" date="2005" name="Science">
        <title>The transcriptional landscape of the mammalian genome.</title>
        <authorList>
            <person name="Carninci P."/>
            <person name="Kasukawa T."/>
            <person name="Katayama S."/>
            <person name="Gough J."/>
            <person name="Frith M.C."/>
            <person name="Maeda N."/>
            <person name="Oyama R."/>
            <person name="Ravasi T."/>
            <person name="Lenhard B."/>
            <person name="Wells C."/>
            <person name="Kodzius R."/>
            <person name="Shimokawa K."/>
            <person name="Bajic V.B."/>
            <person name="Brenner S.E."/>
            <person name="Batalov S."/>
            <person name="Forrest A.R."/>
            <person name="Zavolan M."/>
            <person name="Davis M.J."/>
            <person name="Wilming L.G."/>
            <person name="Aidinis V."/>
            <person name="Allen J.E."/>
            <person name="Ambesi-Impiombato A."/>
            <person name="Apweiler R."/>
            <person name="Aturaliya R.N."/>
            <person name="Bailey T.L."/>
            <person name="Bansal M."/>
            <person name="Baxter L."/>
            <person name="Beisel K.W."/>
            <person name="Bersano T."/>
            <person name="Bono H."/>
            <person name="Chalk A.M."/>
            <person name="Chiu K.P."/>
            <person name="Choudhary V."/>
            <person name="Christoffels A."/>
            <person name="Clutterbuck D.R."/>
            <person name="Crowe M.L."/>
            <person name="Dalla E."/>
            <person name="Dalrymple B.P."/>
            <person name="de Bono B."/>
            <person name="Della Gatta G."/>
            <person name="di Bernardo D."/>
            <person name="Down T."/>
            <person name="Engstrom P."/>
            <person name="Fagiolini M."/>
            <person name="Faulkner G."/>
            <person name="Fletcher C.F."/>
            <person name="Fukushima T."/>
            <person name="Furuno M."/>
            <person name="Futaki S."/>
            <person name="Gariboldi M."/>
            <person name="Georgii-Hemming P."/>
            <person name="Gingeras T.R."/>
            <person name="Gojobori T."/>
            <person name="Green R.E."/>
            <person name="Gustincich S."/>
            <person name="Harbers M."/>
            <person name="Hayashi Y."/>
            <person name="Hensch T.K."/>
            <person name="Hirokawa N."/>
            <person name="Hill D."/>
            <person name="Huminiecki L."/>
            <person name="Iacono M."/>
            <person name="Ikeo K."/>
            <person name="Iwama A."/>
            <person name="Ishikawa T."/>
            <person name="Jakt M."/>
            <person name="Kanapin A."/>
            <person name="Katoh M."/>
            <person name="Kawasawa Y."/>
            <person name="Kelso J."/>
            <person name="Kitamura H."/>
            <person name="Kitano H."/>
            <person name="Kollias G."/>
            <person name="Krishnan S.P."/>
            <person name="Kruger A."/>
            <person name="Kummerfeld S.K."/>
            <person name="Kurochkin I.V."/>
            <person name="Lareau L.F."/>
            <person name="Lazarevic D."/>
            <person name="Lipovich L."/>
            <person name="Liu J."/>
            <person name="Liuni S."/>
            <person name="McWilliam S."/>
            <person name="Madan Babu M."/>
            <person name="Madera M."/>
            <person name="Marchionni L."/>
            <person name="Matsuda H."/>
            <person name="Matsuzawa S."/>
            <person name="Miki H."/>
            <person name="Mignone F."/>
            <person name="Miyake S."/>
            <person name="Morris K."/>
            <person name="Mottagui-Tabar S."/>
            <person name="Mulder N."/>
            <person name="Nakano N."/>
            <person name="Nakauchi H."/>
            <person name="Ng P."/>
            <person name="Nilsson R."/>
            <person name="Nishiguchi S."/>
            <person name="Nishikawa S."/>
            <person name="Nori F."/>
            <person name="Ohara O."/>
            <person name="Okazaki Y."/>
            <person name="Orlando V."/>
            <person name="Pang K.C."/>
            <person name="Pavan W.J."/>
            <person name="Pavesi G."/>
            <person name="Pesole G."/>
            <person name="Petrovsky N."/>
            <person name="Piazza S."/>
            <person name="Reed J."/>
            <person name="Reid J.F."/>
            <person name="Ring B.Z."/>
            <person name="Ringwald M."/>
            <person name="Rost B."/>
            <person name="Ruan Y."/>
            <person name="Salzberg S.L."/>
            <person name="Sandelin A."/>
            <person name="Schneider C."/>
            <person name="Schoenbach C."/>
            <person name="Sekiguchi K."/>
            <person name="Semple C.A."/>
            <person name="Seno S."/>
            <person name="Sessa L."/>
            <person name="Sheng Y."/>
            <person name="Shibata Y."/>
            <person name="Shimada H."/>
            <person name="Shimada K."/>
            <person name="Silva D."/>
            <person name="Sinclair B."/>
            <person name="Sperling S."/>
            <person name="Stupka E."/>
            <person name="Sugiura K."/>
            <person name="Sultana R."/>
            <person name="Takenaka Y."/>
            <person name="Taki K."/>
            <person name="Tammoja K."/>
            <person name="Tan S.L."/>
            <person name="Tang S."/>
            <person name="Taylor M.S."/>
            <person name="Tegner J."/>
            <person name="Teichmann S.A."/>
            <person name="Ueda H.R."/>
            <person name="van Nimwegen E."/>
            <person name="Verardo R."/>
            <person name="Wei C.L."/>
            <person name="Yagi K."/>
            <person name="Yamanishi H."/>
            <person name="Zabarovsky E."/>
            <person name="Zhu S."/>
            <person name="Zimmer A."/>
            <person name="Hide W."/>
            <person name="Bult C."/>
            <person name="Grimmond S.M."/>
            <person name="Teasdale R.D."/>
            <person name="Liu E.T."/>
            <person name="Brusic V."/>
            <person name="Quackenbush J."/>
            <person name="Wahlestedt C."/>
            <person name="Mattick J.S."/>
            <person name="Hume D.A."/>
            <person name="Kai C."/>
            <person name="Sasaki D."/>
            <person name="Tomaru Y."/>
            <person name="Fukuda S."/>
            <person name="Kanamori-Katayama M."/>
            <person name="Suzuki M."/>
            <person name="Aoki J."/>
            <person name="Arakawa T."/>
            <person name="Iida J."/>
            <person name="Imamura K."/>
            <person name="Itoh M."/>
            <person name="Kato T."/>
            <person name="Kawaji H."/>
            <person name="Kawagashira N."/>
            <person name="Kawashima T."/>
            <person name="Kojima M."/>
            <person name="Kondo S."/>
            <person name="Konno H."/>
            <person name="Nakano K."/>
            <person name="Ninomiya N."/>
            <person name="Nishio T."/>
            <person name="Okada M."/>
            <person name="Plessy C."/>
            <person name="Shibata K."/>
            <person name="Shiraki T."/>
            <person name="Suzuki S."/>
            <person name="Tagami M."/>
            <person name="Waki K."/>
            <person name="Watahiki A."/>
            <person name="Okamura-Oho Y."/>
            <person name="Suzuki H."/>
            <person name="Kawai J."/>
            <person name="Hayashizaki Y."/>
        </authorList>
    </citation>
    <scope>NUCLEOTIDE SEQUENCE [LARGE SCALE MRNA] (ISOFORM 4)</scope>
    <source>
        <strain>C57BL/6J</strain>
        <tissue>Testis</tissue>
    </source>
</reference>
<reference key="3">
    <citation type="journal article" date="2004" name="Genome Res.">
        <title>The status, quality, and expansion of the NIH full-length cDNA project: the Mammalian Gene Collection (MGC).</title>
        <authorList>
            <consortium name="The MGC Project Team"/>
        </authorList>
    </citation>
    <scope>NUCLEOTIDE SEQUENCE [LARGE SCALE MRNA] (ISOFORM 3)</scope>
    <source>
        <strain>FVB/N</strain>
        <tissue>Mammary tumor</tissue>
    </source>
</reference>
<sequence length="931" mass="105045">MLLFFALGLLIHFVFFASIFDIYFTSPLVHGMTPQFTPLPPPAKRLVLFVADGLRADTLYELDEDGNSRAPFIRNVIIHEGSWGVSHTRVPTESRPGHVALIAGFYEDVSAVAKGWKENPVEFDSLFNESKYTWSWGSPDILPMFAKGASGDHVYTYSYDAQREDFGAHDATKLDTWVFDKVKDFFDAARNNQSLFTKVNEEKVVFFLHLLGIDTNGHAHRPSSREYKDNIKKVDDGVKEIVSIFKHFYGDDGKTAFIFTSDHGMTDWGSHGAGHPSETLTPFVTWGAGIKFPQNVSAQQYDDEFLKEWRLENWKRRDVNQADIAPLMASLIGVPFPLNSVGILPVGYLNNTGLFKAESMFTNAVQILEQFKVKMTQKKEATLPFLFTPFKLLSDSQQLDILRKARSYIKQEKFDEVVSLCEELIDLALRGLSYYHTYDRLFLGINVAVGFVGWMSYTSLLIIKSHSNIPKGTRKEGKKPHCLLLYSFIATGVLVACFLMIQACPWTYYVYCLLPVPIWYAVLREHEVIQDLVESLLTFPRSHFVAYLLVFTLGIEVLVLSFFYRYMLTAGLIVFAGWPFLTQLWTRAKITFLSWAFFSLLLAVFPLMPVVGRKPNLSLVMGAGFLVLLLSLAVVTTLGKRNIKLVKGELLVLLLQMLSTVLSMYVVYSTHHSLLKKEGLPLMNQIVSWATLASSLVAPLLSSTALSQRLASILLSLMSTYLLLSTGYEALFPLVLSCLMFVWIQVEQETLQQPGVSCKQKLTSIQFTCDTDIAQFRQLCPDDIRRAFFLVFFLLTAFFGTGNIASINSFDLASVYCFLTVFSPFMMGALMMWKILIPFVLVMCAFEAVQITTQLSSKGLFLVVLIISDIMALHFFFLVKDSGSWLDIGTSISHYVIVMSMTIFLVFLNGLAQLLTTKKLQLCGKPKSHLM</sequence>
<gene>
    <name evidence="8" type="primary">Pign</name>
</gene>
<keyword id="KW-0025">Alternative splicing</keyword>
<keyword id="KW-0256">Endoplasmic reticulum</keyword>
<keyword id="KW-0325">Glycoprotein</keyword>
<keyword id="KW-0337">GPI-anchor biosynthesis</keyword>
<keyword id="KW-0472">Membrane</keyword>
<keyword id="KW-1185">Reference proteome</keyword>
<keyword id="KW-0808">Transferase</keyword>
<keyword id="KW-0812">Transmembrane</keyword>
<keyword id="KW-1133">Transmembrane helix</keyword>
<protein>
    <recommendedName>
        <fullName evidence="7">GPI ethanolamine phosphate transferase 1</fullName>
        <ecNumber evidence="3">2.-.-.-</ecNumber>
    </recommendedName>
    <alternativeName>
        <fullName>Phosphatidylinositol-glycan biosynthesis class N protein</fullName>
        <shortName evidence="4">PIG-N</shortName>
    </alternativeName>
</protein>
<comment type="function">
    <text evidence="1 3">Ethanolamine phosphate transferase that catalyzes an ethanolamine phosphate (EtNP) transfer from phosphatidylethanolamine (PE) to the 2-OH position of the first alpha-1,4-linked mannose of the alpha-D-Man-(1-&gt;6)-alpha-D-Man-(1-&gt;4)-alpha-D-GlcN-(1-&gt;6)-(1-radyl,2-acyl-sn-glycero-3-phospho)-2-acyl-inositol (also termed H3) intermediate to generate an alpha-D-Man-(1-&gt;6)-2-PEtn-alpha-D-Man-(1-&gt;4)-alpha-D-GlcN-(1-&gt;6)-(1-radyl,2-acyl-sn-glycero-3-phospho)-2-acyl-inositol and participates in the eighth step of the glycosylphosphatidylinositol-anchor biosynthesis (PubMed:10574991). May act as suppressor of replication stress and chromosome missegregation (By similarity).</text>
</comment>
<comment type="pathway">
    <text evidence="3">Glycolipid biosynthesis; glycosylphosphatidylinositol-anchor biosynthesis.</text>
</comment>
<comment type="subcellular location">
    <subcellularLocation>
        <location evidence="3">Endoplasmic reticulum membrane</location>
        <topology evidence="2">Multi-pass membrane protein</topology>
    </subcellularLocation>
</comment>
<comment type="alternative products">
    <event type="alternative splicing"/>
    <isoform>
        <id>Q9R1S3-1</id>
        <name>1</name>
        <sequence type="displayed"/>
    </isoform>
    <isoform>
        <id>Q9R1S3-2</id>
        <name>2</name>
        <sequence type="described" ref="VSP_019837 VSP_019838"/>
    </isoform>
    <isoform>
        <id>Q9R1S3-3</id>
        <name>3</name>
        <sequence type="described" ref="VSP_019836 VSP_019839"/>
    </isoform>
    <isoform>
        <id>Q9R1S3-4</id>
        <name>4</name>
        <sequence type="described" ref="VSP_019834 VSP_019835"/>
    </isoform>
</comment>
<comment type="miscellaneous">
    <text evidence="3">Target of the inhibitor of GPI biosynthesis YW3548/BE49385A.</text>
</comment>
<comment type="similarity">
    <text evidence="7">Belongs to the PIGG/PIGN/PIGO family. PIGN subfamily.</text>
</comment>
<accession>Q9R1S3</accession>
<accession>Q3V0S6</accession>
<accession>Q8VCC3</accession>
<accession>Q9R1S1</accession>
<accession>Q9R1S2</accession>
<proteinExistence type="evidence at protein level"/>
<evidence type="ECO:0000250" key="1">
    <source>
        <dbReference type="UniProtKB" id="O95427"/>
    </source>
</evidence>
<evidence type="ECO:0000255" key="2"/>
<evidence type="ECO:0000269" key="3">
    <source>
    </source>
</evidence>
<evidence type="ECO:0000303" key="4">
    <source>
    </source>
</evidence>
<evidence type="ECO:0000303" key="5">
    <source>
    </source>
</evidence>
<evidence type="ECO:0000303" key="6">
    <source>
    </source>
</evidence>
<evidence type="ECO:0000305" key="7"/>
<evidence type="ECO:0000312" key="8">
    <source>
        <dbReference type="MGI" id="MGI:1351629"/>
    </source>
</evidence>
<feature type="chain" id="PRO_0000246199" description="GPI ethanolamine phosphate transferase 1">
    <location>
        <begin position="1"/>
        <end position="931"/>
    </location>
</feature>
<feature type="topological domain" description="Cytoplasmic" evidence="2">
    <location>
        <position position="1"/>
    </location>
</feature>
<feature type="transmembrane region" description="Helical" evidence="2">
    <location>
        <begin position="2"/>
        <end position="22"/>
    </location>
</feature>
<feature type="topological domain" description="Lumenal" evidence="2">
    <location>
        <begin position="23"/>
        <end position="442"/>
    </location>
</feature>
<feature type="transmembrane region" description="Helical" evidence="2">
    <location>
        <begin position="443"/>
        <end position="463"/>
    </location>
</feature>
<feature type="topological domain" description="Cytoplasmic" evidence="2">
    <location>
        <begin position="464"/>
        <end position="480"/>
    </location>
</feature>
<feature type="transmembrane region" description="Helical" evidence="2">
    <location>
        <begin position="481"/>
        <end position="501"/>
    </location>
</feature>
<feature type="topological domain" description="Lumenal" evidence="2">
    <location>
        <position position="502"/>
    </location>
</feature>
<feature type="transmembrane region" description="Helical" evidence="2">
    <location>
        <begin position="503"/>
        <end position="523"/>
    </location>
</feature>
<feature type="topological domain" description="Cytoplasmic" evidence="2">
    <location>
        <begin position="524"/>
        <end position="543"/>
    </location>
</feature>
<feature type="transmembrane region" description="Helical" evidence="2">
    <location>
        <begin position="544"/>
        <end position="564"/>
    </location>
</feature>
<feature type="topological domain" description="Lumenal" evidence="2">
    <location>
        <position position="565"/>
    </location>
</feature>
<feature type="transmembrane region" description="Helical" evidence="2">
    <location>
        <begin position="566"/>
        <end position="586"/>
    </location>
</feature>
<feature type="topological domain" description="Cytoplasmic" evidence="2">
    <location>
        <begin position="587"/>
        <end position="591"/>
    </location>
</feature>
<feature type="transmembrane region" description="Helical" evidence="2">
    <location>
        <begin position="592"/>
        <end position="612"/>
    </location>
</feature>
<feature type="topological domain" description="Lumenal" evidence="2">
    <location>
        <begin position="613"/>
        <end position="618"/>
    </location>
</feature>
<feature type="transmembrane region" description="Helical" evidence="2">
    <location>
        <begin position="619"/>
        <end position="639"/>
    </location>
</feature>
<feature type="topological domain" description="Cytoplasmic" evidence="2">
    <location>
        <begin position="640"/>
        <end position="649"/>
    </location>
</feature>
<feature type="transmembrane region" description="Helical" evidence="2">
    <location>
        <begin position="650"/>
        <end position="670"/>
    </location>
</feature>
<feature type="topological domain" description="Lumenal" evidence="2">
    <location>
        <begin position="671"/>
        <end position="685"/>
    </location>
</feature>
<feature type="transmembrane region" description="Helical" evidence="2">
    <location>
        <begin position="686"/>
        <end position="706"/>
    </location>
</feature>
<feature type="topological domain" description="Cytoplasmic" evidence="2">
    <location>
        <begin position="707"/>
        <end position="723"/>
    </location>
</feature>
<feature type="transmembrane region" description="Helical" evidence="2">
    <location>
        <begin position="724"/>
        <end position="744"/>
    </location>
</feature>
<feature type="topological domain" description="Lumenal" evidence="2">
    <location>
        <begin position="745"/>
        <end position="786"/>
    </location>
</feature>
<feature type="transmembrane region" description="Helical" evidence="2">
    <location>
        <begin position="787"/>
        <end position="807"/>
    </location>
</feature>
<feature type="topological domain" description="Cytoplasmic" evidence="2">
    <location>
        <begin position="808"/>
        <end position="824"/>
    </location>
</feature>
<feature type="transmembrane region" description="Helical" evidence="2">
    <location>
        <begin position="825"/>
        <end position="845"/>
    </location>
</feature>
<feature type="topological domain" description="Lumenal" evidence="2">
    <location>
        <begin position="846"/>
        <end position="858"/>
    </location>
</feature>
<feature type="transmembrane region" description="Helical" evidence="2">
    <location>
        <begin position="859"/>
        <end position="879"/>
    </location>
</feature>
<feature type="topological domain" description="Cytoplasmic" evidence="2">
    <location>
        <begin position="880"/>
        <end position="894"/>
    </location>
</feature>
<feature type="transmembrane region" description="Helical" evidence="2">
    <location>
        <begin position="895"/>
        <end position="915"/>
    </location>
</feature>
<feature type="topological domain" description="Lumenal" evidence="2">
    <location>
        <begin position="916"/>
        <end position="931"/>
    </location>
</feature>
<feature type="glycosylation site" description="N-linked (GlcNAc...) asparagine" evidence="2">
    <location>
        <position position="128"/>
    </location>
</feature>
<feature type="glycosylation site" description="N-linked (GlcNAc...) asparagine" evidence="2">
    <location>
        <position position="192"/>
    </location>
</feature>
<feature type="glycosylation site" description="N-linked (GlcNAc...) asparagine" evidence="2">
    <location>
        <position position="295"/>
    </location>
</feature>
<feature type="glycosylation site" description="N-linked (GlcNAc...) asparagine" evidence="2">
    <location>
        <position position="350"/>
    </location>
</feature>
<feature type="glycosylation site" description="N-linked (GlcNAc...) asparagine" evidence="2">
    <location>
        <position position="616"/>
    </location>
</feature>
<feature type="splice variant" id="VSP_019834" description="In isoform 4." evidence="6">
    <location>
        <begin position="1"/>
        <end position="602"/>
    </location>
</feature>
<feature type="splice variant" id="VSP_019835" description="In isoform 4." evidence="6">
    <original>AVFPLMPVVGRKPNLSLVMGAGFLVLLLSLAVVTTLGKRNIKLVKGELLVLLLQMLSTVLSMYVVYSTHHSLLKKEGLPLMNQIVSWATL</original>
    <variation>MVLFISITCLYVFSSFSVRTSTCLIVFSCFSLRTCNSLAVFSCISLSDLLKSFLMSSIIIMRYAFKSRSRFSGVLGCPGLGEVGVLGSDD</variation>
    <location>
        <begin position="603"/>
        <end position="692"/>
    </location>
</feature>
<feature type="splice variant" id="VSP_019836" description="In isoform 3." evidence="5">
    <original>VFFLLTAFFGTGNIASINSFDLASVYCFLTVFSPFM</original>
    <variation>ILLIFPVFLRLFDYKRIRILLAQENYHRSLKAAWEL</variation>
    <location>
        <begin position="791"/>
        <end position="826"/>
    </location>
</feature>
<feature type="splice variant" id="VSP_019837" description="In isoform 2." evidence="4">
    <original>VFFLLTAF</original>
    <variation>FFCPRRNY</variation>
    <location>
        <begin position="791"/>
        <end position="798"/>
    </location>
</feature>
<feature type="splice variant" id="VSP_019838" description="In isoform 2." evidence="4">
    <location>
        <begin position="799"/>
        <end position="931"/>
    </location>
</feature>
<feature type="splice variant" id="VSP_019839" description="In isoform 3." evidence="5">
    <location>
        <begin position="827"/>
        <end position="931"/>
    </location>
</feature>
<feature type="sequence conflict" description="In Ref. 1; BAA82619/BAA82620." evidence="7" ref="1">
    <original>A</original>
    <variation>V</variation>
    <location>
        <position position="17"/>
    </location>
</feature>
<feature type="sequence conflict" description="In Ref. 1; BAA82619/BAA82620/BAA82663." evidence="7" ref="1">
    <original>I</original>
    <variation>M</variation>
    <location>
        <position position="78"/>
    </location>
</feature>
<feature type="sequence conflict" description="In Ref. 1; BAA82619/BAA82620." evidence="7" ref="1">
    <original>I</original>
    <variation>V</variation>
    <location>
        <position position="213"/>
    </location>
</feature>
<organism>
    <name type="scientific">Mus musculus</name>
    <name type="common">Mouse</name>
    <dbReference type="NCBI Taxonomy" id="10090"/>
    <lineage>
        <taxon>Eukaryota</taxon>
        <taxon>Metazoa</taxon>
        <taxon>Chordata</taxon>
        <taxon>Craniata</taxon>
        <taxon>Vertebrata</taxon>
        <taxon>Euteleostomi</taxon>
        <taxon>Mammalia</taxon>
        <taxon>Eutheria</taxon>
        <taxon>Euarchontoglires</taxon>
        <taxon>Glires</taxon>
        <taxon>Rodentia</taxon>
        <taxon>Myomorpha</taxon>
        <taxon>Muroidea</taxon>
        <taxon>Muridae</taxon>
        <taxon>Murinae</taxon>
        <taxon>Mus</taxon>
        <taxon>Mus</taxon>
    </lineage>
</organism>
<dbReference type="EC" id="2.-.-.-" evidence="3"/>
<dbReference type="EMBL" id="AB030279">
    <property type="protein sequence ID" value="BAA82619.1"/>
    <property type="molecule type" value="mRNA"/>
</dbReference>
<dbReference type="EMBL" id="AB030280">
    <property type="protein sequence ID" value="BAA82620.1"/>
    <property type="molecule type" value="mRNA"/>
</dbReference>
<dbReference type="EMBL" id="AB030316">
    <property type="protein sequence ID" value="BAA82663.1"/>
    <property type="molecule type" value="Genomic_DNA"/>
</dbReference>
<dbReference type="EMBL" id="AK132928">
    <property type="protein sequence ID" value="BAE21427.1"/>
    <property type="molecule type" value="mRNA"/>
</dbReference>
<dbReference type="EMBL" id="BC021148">
    <property type="protein sequence ID" value="AAH21148.1"/>
    <property type="molecule type" value="mRNA"/>
</dbReference>
<dbReference type="CCDS" id="CCDS15205.1">
    <molecule id="Q9R1S3-1"/>
</dbReference>
<dbReference type="SMR" id="Q9R1S3"/>
<dbReference type="FunCoup" id="Q9R1S3">
    <property type="interactions" value="1631"/>
</dbReference>
<dbReference type="STRING" id="10090.ENSMUSP00000139638"/>
<dbReference type="GlyCosmos" id="Q9R1S3">
    <property type="glycosylation" value="5 sites, No reported glycans"/>
</dbReference>
<dbReference type="GlyGen" id="Q9R1S3">
    <property type="glycosylation" value="5 sites, 2 N-linked glycans (3 sites)"/>
</dbReference>
<dbReference type="iPTMnet" id="Q9R1S3"/>
<dbReference type="PhosphoSitePlus" id="Q9R1S3"/>
<dbReference type="SwissPalm" id="Q9R1S3"/>
<dbReference type="PaxDb" id="10090-ENSMUSP00000139638"/>
<dbReference type="ProteomicsDB" id="287719">
    <molecule id="Q9R1S3-1"/>
</dbReference>
<dbReference type="ProteomicsDB" id="287720">
    <molecule id="Q9R1S3-2"/>
</dbReference>
<dbReference type="ProteomicsDB" id="287721">
    <molecule id="Q9R1S3-3"/>
</dbReference>
<dbReference type="ProteomicsDB" id="287722">
    <molecule id="Q9R1S3-4"/>
</dbReference>
<dbReference type="Pumba" id="Q9R1S3"/>
<dbReference type="UCSC" id="uc011wqa.2">
    <molecule id="Q9R1S3-4"/>
    <property type="organism name" value="mouse"/>
</dbReference>
<dbReference type="AGR" id="MGI:1351629"/>
<dbReference type="MGI" id="MGI:1351629">
    <property type="gene designation" value="Pign"/>
</dbReference>
<dbReference type="eggNOG" id="KOG2124">
    <property type="taxonomic scope" value="Eukaryota"/>
</dbReference>
<dbReference type="InParanoid" id="Q9R1S3"/>
<dbReference type="PhylomeDB" id="Q9R1S3"/>
<dbReference type="BRENDA" id="2.7.7.B25">
    <property type="organism ID" value="3474"/>
</dbReference>
<dbReference type="Reactome" id="R-MMU-162710">
    <property type="pathway name" value="Synthesis of glycosylphosphatidylinositol (GPI)"/>
</dbReference>
<dbReference type="UniPathway" id="UPA00196"/>
<dbReference type="ChiTaRS" id="Pign">
    <property type="organism name" value="mouse"/>
</dbReference>
<dbReference type="PRO" id="PR:Q9R1S3"/>
<dbReference type="Proteomes" id="UP000000589">
    <property type="component" value="Unplaced"/>
</dbReference>
<dbReference type="RNAct" id="Q9R1S3">
    <property type="molecule type" value="protein"/>
</dbReference>
<dbReference type="GO" id="GO:0005789">
    <property type="term" value="C:endoplasmic reticulum membrane"/>
    <property type="evidence" value="ECO:0000314"/>
    <property type="project" value="MGI"/>
</dbReference>
<dbReference type="GO" id="GO:0051377">
    <property type="term" value="F:mannose-ethanolamine phosphotransferase activity"/>
    <property type="evidence" value="ECO:0000314"/>
    <property type="project" value="UniProtKB"/>
</dbReference>
<dbReference type="GO" id="GO:0006506">
    <property type="term" value="P:GPI anchor biosynthetic process"/>
    <property type="evidence" value="ECO:0000314"/>
    <property type="project" value="UniProtKB"/>
</dbReference>
<dbReference type="CDD" id="cd16020">
    <property type="entry name" value="GPI_EPT_1"/>
    <property type="match status" value="1"/>
</dbReference>
<dbReference type="FunFam" id="3.40.720.10:FF:000015">
    <property type="entry name" value="GPI ethanolamine phosphate transferase 1"/>
    <property type="match status" value="1"/>
</dbReference>
<dbReference type="Gene3D" id="3.40.720.10">
    <property type="entry name" value="Alkaline Phosphatase, subunit A"/>
    <property type="match status" value="2"/>
</dbReference>
<dbReference type="InterPro" id="IPR017850">
    <property type="entry name" value="Alkaline_phosphatase_core_sf"/>
</dbReference>
<dbReference type="InterPro" id="IPR007070">
    <property type="entry name" value="GPI_EtnP_transferase_1"/>
</dbReference>
<dbReference type="InterPro" id="IPR017852">
    <property type="entry name" value="GPI_EtnP_transferase_1_C"/>
</dbReference>
<dbReference type="InterPro" id="IPR002591">
    <property type="entry name" value="Phosphodiest/P_Trfase"/>
</dbReference>
<dbReference type="InterPro" id="IPR037671">
    <property type="entry name" value="PIGN_N"/>
</dbReference>
<dbReference type="PANTHER" id="PTHR12250:SF0">
    <property type="entry name" value="GPI ETHANOLAMINE PHOSPHATE TRANSFERASE 1"/>
    <property type="match status" value="1"/>
</dbReference>
<dbReference type="PANTHER" id="PTHR12250">
    <property type="entry name" value="PHOSPHATIDYLINOSITOL GLYCAN, CLASS N"/>
    <property type="match status" value="1"/>
</dbReference>
<dbReference type="Pfam" id="PF01663">
    <property type="entry name" value="Phosphodiest"/>
    <property type="match status" value="1"/>
</dbReference>
<dbReference type="Pfam" id="PF04987">
    <property type="entry name" value="PigN"/>
    <property type="match status" value="1"/>
</dbReference>
<dbReference type="SUPFAM" id="SSF53649">
    <property type="entry name" value="Alkaline phosphatase-like"/>
    <property type="match status" value="1"/>
</dbReference>